<protein>
    <recommendedName>
        <fullName evidence="6">Glutathione peroxidase-like peroxiredoxin 1</fullName>
        <ecNumber evidence="3 4">1.11.1.24</ecNumber>
        <ecNumber evidence="3 4">1.11.1.9</ecNumber>
    </recommendedName>
    <alternativeName>
        <fullName evidence="5">Glutathione peroxidase homolog 1</fullName>
        <shortName>GPx 1</shortName>
    </alternativeName>
</protein>
<dbReference type="EC" id="1.11.1.24" evidence="3 4"/>
<dbReference type="EC" id="1.11.1.9" evidence="3 4"/>
<dbReference type="EMBL" id="Z28026">
    <property type="protein sequence ID" value="CAA81861.1"/>
    <property type="molecule type" value="Genomic_DNA"/>
</dbReference>
<dbReference type="EMBL" id="AY557895">
    <property type="protein sequence ID" value="AAS56221.1"/>
    <property type="molecule type" value="Genomic_DNA"/>
</dbReference>
<dbReference type="EMBL" id="BK006944">
    <property type="protein sequence ID" value="DAA09128.1"/>
    <property type="molecule type" value="Genomic_DNA"/>
</dbReference>
<dbReference type="PIR" id="S37843">
    <property type="entry name" value="S37843"/>
</dbReference>
<dbReference type="RefSeq" id="NP_012899.3">
    <property type="nucleotide sequence ID" value="NM_001179592.3"/>
</dbReference>
<dbReference type="SMR" id="P36014"/>
<dbReference type="BioGRID" id="34105">
    <property type="interactions" value="34"/>
</dbReference>
<dbReference type="DIP" id="DIP-5437N"/>
<dbReference type="FunCoup" id="P36014">
    <property type="interactions" value="428"/>
</dbReference>
<dbReference type="IntAct" id="P36014">
    <property type="interactions" value="3"/>
</dbReference>
<dbReference type="MINT" id="P36014"/>
<dbReference type="STRING" id="4932.YKL026C"/>
<dbReference type="PeroxiBase" id="3740">
    <property type="entry name" value="SceGPx01"/>
</dbReference>
<dbReference type="PaxDb" id="4932-YKL026C"/>
<dbReference type="PeptideAtlas" id="P36014"/>
<dbReference type="EnsemblFungi" id="YKL026C_mRNA">
    <property type="protein sequence ID" value="YKL026C"/>
    <property type="gene ID" value="YKL026C"/>
</dbReference>
<dbReference type="GeneID" id="853842"/>
<dbReference type="KEGG" id="sce:YKL026C"/>
<dbReference type="AGR" id="SGD:S000001509"/>
<dbReference type="SGD" id="S000001509">
    <property type="gene designation" value="GPX1"/>
</dbReference>
<dbReference type="VEuPathDB" id="FungiDB:YKL026C"/>
<dbReference type="eggNOG" id="KOG1651">
    <property type="taxonomic scope" value="Eukaryota"/>
</dbReference>
<dbReference type="GeneTree" id="ENSGT00940000165680"/>
<dbReference type="HOGENOM" id="CLU_029507_3_2_1"/>
<dbReference type="InParanoid" id="P36014"/>
<dbReference type="OMA" id="PTWNFCK"/>
<dbReference type="OrthoDB" id="446890at2759"/>
<dbReference type="BioCyc" id="YEAST:YKL026C-MONOMER"/>
<dbReference type="BioGRID-ORCS" id="853842">
    <property type="hits" value="0 hits in 10 CRISPR screens"/>
</dbReference>
<dbReference type="PRO" id="PR:P36014"/>
<dbReference type="Proteomes" id="UP000002311">
    <property type="component" value="Chromosome XI"/>
</dbReference>
<dbReference type="RNAct" id="P36014">
    <property type="molecule type" value="protein"/>
</dbReference>
<dbReference type="GO" id="GO:0005829">
    <property type="term" value="C:cytosol"/>
    <property type="evidence" value="ECO:0007005"/>
    <property type="project" value="SGD"/>
</dbReference>
<dbReference type="GO" id="GO:0005741">
    <property type="term" value="C:mitochondrial outer membrane"/>
    <property type="evidence" value="ECO:0007669"/>
    <property type="project" value="UniProtKB-SubCell"/>
</dbReference>
<dbReference type="GO" id="GO:0005782">
    <property type="term" value="C:peroxisomal matrix"/>
    <property type="evidence" value="ECO:0000314"/>
    <property type="project" value="SGD"/>
</dbReference>
<dbReference type="GO" id="GO:0004602">
    <property type="term" value="F:glutathione peroxidase activity"/>
    <property type="evidence" value="ECO:0000315"/>
    <property type="project" value="SGD"/>
</dbReference>
<dbReference type="GO" id="GO:0047066">
    <property type="term" value="F:phospholipid-hydroperoxide glutathione peroxidase activity"/>
    <property type="evidence" value="ECO:0000314"/>
    <property type="project" value="SGD"/>
</dbReference>
<dbReference type="GO" id="GO:0140824">
    <property type="term" value="F:thioredoxin-dependent peroxiredoxin activity"/>
    <property type="evidence" value="ECO:0007669"/>
    <property type="project" value="UniProtKB-EC"/>
</dbReference>
<dbReference type="GO" id="GO:0034599">
    <property type="term" value="P:cellular response to oxidative stress"/>
    <property type="evidence" value="ECO:0000318"/>
    <property type="project" value="GO_Central"/>
</dbReference>
<dbReference type="GO" id="GO:0007031">
    <property type="term" value="P:peroxisome organization"/>
    <property type="evidence" value="ECO:0000315"/>
    <property type="project" value="SGD"/>
</dbReference>
<dbReference type="CDD" id="cd00340">
    <property type="entry name" value="GSH_Peroxidase"/>
    <property type="match status" value="1"/>
</dbReference>
<dbReference type="FunFam" id="3.40.30.10:FF:000010">
    <property type="entry name" value="Glutathione peroxidase"/>
    <property type="match status" value="1"/>
</dbReference>
<dbReference type="Gene3D" id="3.40.30.10">
    <property type="entry name" value="Glutaredoxin"/>
    <property type="match status" value="1"/>
</dbReference>
<dbReference type="InterPro" id="IPR000889">
    <property type="entry name" value="Glutathione_peroxidase"/>
</dbReference>
<dbReference type="InterPro" id="IPR029759">
    <property type="entry name" value="GPX_AS"/>
</dbReference>
<dbReference type="InterPro" id="IPR029760">
    <property type="entry name" value="GPX_CS"/>
</dbReference>
<dbReference type="InterPro" id="IPR036249">
    <property type="entry name" value="Thioredoxin-like_sf"/>
</dbReference>
<dbReference type="PANTHER" id="PTHR11592">
    <property type="entry name" value="GLUTATHIONE PEROXIDASE"/>
    <property type="match status" value="1"/>
</dbReference>
<dbReference type="PANTHER" id="PTHR11592:SF78">
    <property type="entry name" value="GLUTATHIONE PEROXIDASE"/>
    <property type="match status" value="1"/>
</dbReference>
<dbReference type="Pfam" id="PF00255">
    <property type="entry name" value="GSHPx"/>
    <property type="match status" value="1"/>
</dbReference>
<dbReference type="PIRSF" id="PIRSF000303">
    <property type="entry name" value="Glutathion_perox"/>
    <property type="match status" value="1"/>
</dbReference>
<dbReference type="PRINTS" id="PR01011">
    <property type="entry name" value="GLUTPROXDASE"/>
</dbReference>
<dbReference type="SUPFAM" id="SSF52833">
    <property type="entry name" value="Thioredoxin-like"/>
    <property type="match status" value="1"/>
</dbReference>
<dbReference type="PROSITE" id="PS00460">
    <property type="entry name" value="GLUTATHIONE_PEROXID_1"/>
    <property type="match status" value="1"/>
</dbReference>
<dbReference type="PROSITE" id="PS00763">
    <property type="entry name" value="GLUTATHIONE_PEROXID_2"/>
    <property type="match status" value="1"/>
</dbReference>
<dbReference type="PROSITE" id="PS51355">
    <property type="entry name" value="GLUTATHIONE_PEROXID_3"/>
    <property type="match status" value="1"/>
</dbReference>
<reference key="1">
    <citation type="journal article" date="1994" name="Nature">
        <title>Complete DNA sequence of yeast chromosome XI.</title>
        <authorList>
            <person name="Dujon B."/>
            <person name="Alexandraki D."/>
            <person name="Andre B."/>
            <person name="Ansorge W."/>
            <person name="Baladron V."/>
            <person name="Ballesta J.P.G."/>
            <person name="Banrevi A."/>
            <person name="Bolle P.-A."/>
            <person name="Bolotin-Fukuhara M."/>
            <person name="Bossier P."/>
            <person name="Bou G."/>
            <person name="Boyer J."/>
            <person name="Buitrago M.J."/>
            <person name="Cheret G."/>
            <person name="Colleaux L."/>
            <person name="Daignan-Fornier B."/>
            <person name="del Rey F."/>
            <person name="Dion C."/>
            <person name="Domdey H."/>
            <person name="Duesterhoeft A."/>
            <person name="Duesterhus S."/>
            <person name="Entian K.-D."/>
            <person name="Erfle H."/>
            <person name="Esteban P.F."/>
            <person name="Feldmann H."/>
            <person name="Fernandes L."/>
            <person name="Fobo G.M."/>
            <person name="Fritz C."/>
            <person name="Fukuhara H."/>
            <person name="Gabel C."/>
            <person name="Gaillon L."/>
            <person name="Garcia-Cantalejo J.M."/>
            <person name="Garcia-Ramirez J.J."/>
            <person name="Gent M.E."/>
            <person name="Ghazvini M."/>
            <person name="Goffeau A."/>
            <person name="Gonzalez A."/>
            <person name="Grothues D."/>
            <person name="Guerreiro P."/>
            <person name="Hegemann J.H."/>
            <person name="Hewitt N."/>
            <person name="Hilger F."/>
            <person name="Hollenberg C.P."/>
            <person name="Horaitis O."/>
            <person name="Indge K.J."/>
            <person name="Jacquier A."/>
            <person name="James C.M."/>
            <person name="Jauniaux J.-C."/>
            <person name="Jimenez A."/>
            <person name="Keuchel H."/>
            <person name="Kirchrath L."/>
            <person name="Kleine K."/>
            <person name="Koetter P."/>
            <person name="Legrain P."/>
            <person name="Liebl S."/>
            <person name="Louis E.J."/>
            <person name="Maia e Silva A."/>
            <person name="Marck C."/>
            <person name="Monnier A.-L."/>
            <person name="Moestl D."/>
            <person name="Mueller S."/>
            <person name="Obermaier B."/>
            <person name="Oliver S.G."/>
            <person name="Pallier C."/>
            <person name="Pascolo S."/>
            <person name="Pfeiffer F."/>
            <person name="Philippsen P."/>
            <person name="Planta R.J."/>
            <person name="Pohl F.M."/>
            <person name="Pohl T.M."/>
            <person name="Poehlmann R."/>
            <person name="Portetelle D."/>
            <person name="Purnelle B."/>
            <person name="Puzos V."/>
            <person name="Ramezani Rad M."/>
            <person name="Rasmussen S.W."/>
            <person name="Remacha M.A."/>
            <person name="Revuelta J.L."/>
            <person name="Richard G.-F."/>
            <person name="Rieger M."/>
            <person name="Rodrigues-Pousada C."/>
            <person name="Rose M."/>
            <person name="Rupp T."/>
            <person name="Santos M.A."/>
            <person name="Schwager C."/>
            <person name="Sensen C."/>
            <person name="Skala J."/>
            <person name="Soares H."/>
            <person name="Sor F."/>
            <person name="Stegemann J."/>
            <person name="Tettelin H."/>
            <person name="Thierry A."/>
            <person name="Tzermia M."/>
            <person name="Urrestarazu L.A."/>
            <person name="van Dyck L."/>
            <person name="van Vliet-Reedijk J.C."/>
            <person name="Valens M."/>
            <person name="Vandenbol M."/>
            <person name="Vilela C."/>
            <person name="Vissers S."/>
            <person name="von Wettstein D."/>
            <person name="Voss H."/>
            <person name="Wiemann S."/>
            <person name="Xu G."/>
            <person name="Zimmermann J."/>
            <person name="Haasemann M."/>
            <person name="Becker I."/>
            <person name="Mewes H.-W."/>
        </authorList>
    </citation>
    <scope>NUCLEOTIDE SEQUENCE [LARGE SCALE GENOMIC DNA]</scope>
    <source>
        <strain>ATCC 204508 / S288c</strain>
    </source>
</reference>
<reference key="2">
    <citation type="journal article" date="2014" name="G3 (Bethesda)">
        <title>The reference genome sequence of Saccharomyces cerevisiae: Then and now.</title>
        <authorList>
            <person name="Engel S.R."/>
            <person name="Dietrich F.S."/>
            <person name="Fisk D.G."/>
            <person name="Binkley G."/>
            <person name="Balakrishnan R."/>
            <person name="Costanzo M.C."/>
            <person name="Dwight S.S."/>
            <person name="Hitz B.C."/>
            <person name="Karra K."/>
            <person name="Nash R.S."/>
            <person name="Weng S."/>
            <person name="Wong E.D."/>
            <person name="Lloyd P."/>
            <person name="Skrzypek M.S."/>
            <person name="Miyasato S.R."/>
            <person name="Simison M."/>
            <person name="Cherry J.M."/>
        </authorList>
    </citation>
    <scope>GENOME REANNOTATION</scope>
    <source>
        <strain>ATCC 204508 / S288c</strain>
    </source>
</reference>
<reference key="3">
    <citation type="journal article" date="2007" name="Genome Res.">
        <title>Approaching a complete repository of sequence-verified protein-encoding clones for Saccharomyces cerevisiae.</title>
        <authorList>
            <person name="Hu Y."/>
            <person name="Rolfs A."/>
            <person name="Bhullar B."/>
            <person name="Murthy T.V.S."/>
            <person name="Zhu C."/>
            <person name="Berger M.F."/>
            <person name="Camargo A.A."/>
            <person name="Kelley F."/>
            <person name="McCarron S."/>
            <person name="Jepson D."/>
            <person name="Richardson A."/>
            <person name="Raphael J."/>
            <person name="Moreira D."/>
            <person name="Taycher E."/>
            <person name="Zuo D."/>
            <person name="Mohr S."/>
            <person name="Kane M.F."/>
            <person name="Williamson J."/>
            <person name="Simpson A.J.G."/>
            <person name="Bulyk M.L."/>
            <person name="Harlow E."/>
            <person name="Marsischky G."/>
            <person name="Kolodner R.D."/>
            <person name="LaBaer J."/>
        </authorList>
    </citation>
    <scope>NUCLEOTIDE SEQUENCE [GENOMIC DNA]</scope>
    <source>
        <strain>ATCC 204508 / S288c</strain>
    </source>
</reference>
<reference key="4">
    <citation type="journal article" date="1999" name="J. Biol. Chem.">
        <title>Genetic analysis of glutathione peroxidase in oxidative stress response of Saccharomyces cerevisiae.</title>
        <authorList>
            <person name="Inoue Y."/>
            <person name="Matsuda T."/>
            <person name="Sugiyama K."/>
            <person name="Izawa S."/>
            <person name="Kimura A."/>
        </authorList>
    </citation>
    <scope>FUNCTION</scope>
    <scope>INDUCTION</scope>
</reference>
<reference key="5">
    <citation type="journal article" date="2001" name="J. Biol. Chem.">
        <title>Saccharomyces cerevisiae expresses three phospholipid hydroperoxide glutathione peroxidases.</title>
        <authorList>
            <person name="Avery A.M."/>
            <person name="Avery S.V."/>
        </authorList>
    </citation>
    <scope>FUNCTION</scope>
</reference>
<reference key="6">
    <citation type="journal article" date="2010" name="FEMS Yeast Res.">
        <title>Kinetics and redox regulation of Gpx1, an atypical 2-Cys peroxiredoxin, in Saccharomyces cerevisiae.</title>
        <authorList>
            <person name="Ohdate T."/>
            <person name="Kita K."/>
            <person name="Inoue Y."/>
        </authorList>
    </citation>
    <scope>FUNCTION</scope>
    <scope>CATALYTIC ACTIVITY</scope>
    <scope>BIOPHYSICOCHEMICAL PROPERTIES</scope>
    <scope>SUBUNIT</scope>
    <scope>MUTAGENESIS OF CYS-36</scope>
</reference>
<reference key="7">
    <citation type="journal article" date="2012" name="Biochim. Biophys. Acta">
        <title>Involvement of glutathione peroxidase 1 in growth and peroxisome formation in Saccharomyces cerevisiae in oleic acid medium.</title>
        <authorList>
            <person name="Ohdate T."/>
            <person name="Inoue Y."/>
        </authorList>
    </citation>
    <scope>FUNCTION</scope>
    <scope>CATALYTIC ACTIVITY</scope>
    <scope>SUBCELLULAR LOCATION</scope>
    <scope>DISRUPTION PHENOTYPE</scope>
</reference>
<proteinExistence type="evidence at protein level"/>
<feature type="chain" id="PRO_0000066641" description="Glutathione peroxidase-like peroxiredoxin 1">
    <location>
        <begin position="1"/>
        <end position="167"/>
    </location>
</feature>
<feature type="active site" description="Cysteine sulfenic acid (-SOH) intermediate" evidence="9 10">
    <location>
        <position position="36"/>
    </location>
</feature>
<feature type="disulfide bond" description="Redox-active" evidence="9">
    <location>
        <begin position="36"/>
        <end position="82"/>
    </location>
</feature>
<feature type="mutagenesis site" description="Prevents oxidation of the protein." evidence="3">
    <original>C</original>
    <variation>S</variation>
    <location>
        <position position="36"/>
    </location>
</feature>
<name>GPX1_YEAST</name>
<gene>
    <name evidence="5" type="primary">GPX1</name>
    <name evidence="11" type="ordered locus">YKL026C</name>
</gene>
<evidence type="ECO:0000269" key="1">
    <source>
    </source>
</evidence>
<evidence type="ECO:0000269" key="2">
    <source>
    </source>
</evidence>
<evidence type="ECO:0000269" key="3">
    <source>
    </source>
</evidence>
<evidence type="ECO:0000269" key="4">
    <source>
    </source>
</evidence>
<evidence type="ECO:0000303" key="5">
    <source>
    </source>
</evidence>
<evidence type="ECO:0000305" key="6"/>
<evidence type="ECO:0000305" key="7">
    <source>
    </source>
</evidence>
<evidence type="ECO:0000305" key="8">
    <source>
    </source>
</evidence>
<evidence type="ECO:0000305" key="9">
    <source>
    </source>
</evidence>
<evidence type="ECO:0000305" key="10">
    <source>
    </source>
</evidence>
<evidence type="ECO:0000312" key="11">
    <source>
        <dbReference type="SGD" id="S000001509"/>
    </source>
</evidence>
<comment type="function">
    <text evidence="1 2 3 4">Glutathione peroxidase-like protein that protects cells from phospholipid hydroperoxides and nonphospholipid peroxides during oxidative stress (PubMed:10480913, PubMed:11445588). Has peroxidase activity using thioredoxin or glutathione as a reducing power (PubMed:20572871, PubMed:22659048). Involved in peroxisome formation (PubMed:22659048).</text>
</comment>
<comment type="catalytic activity">
    <reaction evidence="3 4">
        <text>2 glutathione + H2O2 = glutathione disulfide + 2 H2O</text>
        <dbReference type="Rhea" id="RHEA:16833"/>
        <dbReference type="ChEBI" id="CHEBI:15377"/>
        <dbReference type="ChEBI" id="CHEBI:16240"/>
        <dbReference type="ChEBI" id="CHEBI:57925"/>
        <dbReference type="ChEBI" id="CHEBI:58297"/>
        <dbReference type="EC" id="1.11.1.9"/>
    </reaction>
</comment>
<comment type="catalytic activity">
    <reaction evidence="3 4">
        <text>a hydroperoxide + [thioredoxin]-dithiol = an alcohol + [thioredoxin]-disulfide + H2O</text>
        <dbReference type="Rhea" id="RHEA:62620"/>
        <dbReference type="Rhea" id="RHEA-COMP:10698"/>
        <dbReference type="Rhea" id="RHEA-COMP:10700"/>
        <dbReference type="ChEBI" id="CHEBI:15377"/>
        <dbReference type="ChEBI" id="CHEBI:29950"/>
        <dbReference type="ChEBI" id="CHEBI:30879"/>
        <dbReference type="ChEBI" id="CHEBI:35924"/>
        <dbReference type="ChEBI" id="CHEBI:50058"/>
        <dbReference type="EC" id="1.11.1.24"/>
    </reaction>
</comment>
<comment type="biophysicochemical properties">
    <kinetics>
        <KM evidence="3">141 uM for H(2)O(2) (using glutathione as electron donor)</KM>
        <KM evidence="3">75 uM for tert-butyl hydroperoxide (using glutathione as electron donor)</KM>
        <KM evidence="3">120 uM for H(2)O(2) (using thioredoxin as electron donor)</KM>
        <KM evidence="3">223 uM for tert-butyl hydroperoxide (using glutathione as electron donor)</KM>
        <Vmax evidence="3">2.98 umol/min/mg enzyme for H(2)O(2) (using glutathione as electron donor)</Vmax>
        <Vmax evidence="3">0.579 umol/min/mg enzyme for tert-butyl hydroperoxide (using glutathione as electron donor)</Vmax>
        <Vmax evidence="3">0.739 umol/min/mg enzyme for H(2)O(2) (using thioredoxin as electron donor)</Vmax>
        <Vmax evidence="3">1.25 umol/min/mg enzyme for tert-butyl hydroperoxide (using thioredoxin as electron donor)</Vmax>
    </kinetics>
</comment>
<comment type="subunit">
    <text evidence="3">Monomer.</text>
</comment>
<comment type="subcellular location">
    <subcellularLocation>
        <location evidence="4">Peroxisome matrix</location>
    </subcellularLocation>
    <subcellularLocation>
        <location>Mitochondrion outer membrane</location>
        <topology evidence="4">Peripheral membrane protein</topology>
    </subcellularLocation>
</comment>
<comment type="induction">
    <text evidence="1">By glucose starvation.</text>
</comment>
<comment type="disruption phenotype">
    <text evidence="4">Impairs growth and peroxisome formation in oleic acid medium.</text>
</comment>
<comment type="miscellaneous">
    <text evidence="9">The active site is a conserved redox-active cysteine residue, the peroxidatic cysteine (C(P)), which makes the nucleophilic attack on the peroxide substrate. The peroxide oxidizes the C(P)-SH to cysteine sulfenic acid (C(P)-SOH), which then reacts with another cysteine residue, the resolving cysteine (C(R)), to form a disulfide bridge. The disulfide is subsequently reduced by an appropriate electron donor to complete the catalytic cycle. In this atypical 2-Cys peroxiredoxin, C(R) is present in the same subunit to form an intramolecular disulfide.</text>
</comment>
<comment type="similarity">
    <text evidence="6">Belongs to the glutathione peroxidase family.</text>
</comment>
<comment type="caution">
    <text evidence="7 8 9">Was originally thought to be a glutathione peroxidase (PubMed:10480913) or a phospholipid hydroperoxide glutathione peroxidase (PubMed:11445588), but functions as an atypical 2-Cys peroxiredoxin using both glutathione and thioredoxin almost equally as reducing power instead (PubMed:20572871).</text>
</comment>
<organism>
    <name type="scientific">Saccharomyces cerevisiae (strain ATCC 204508 / S288c)</name>
    <name type="common">Baker's yeast</name>
    <dbReference type="NCBI Taxonomy" id="559292"/>
    <lineage>
        <taxon>Eukaryota</taxon>
        <taxon>Fungi</taxon>
        <taxon>Dikarya</taxon>
        <taxon>Ascomycota</taxon>
        <taxon>Saccharomycotina</taxon>
        <taxon>Saccharomycetes</taxon>
        <taxon>Saccharomycetales</taxon>
        <taxon>Saccharomycetaceae</taxon>
        <taxon>Saccharomyces</taxon>
    </lineage>
</organism>
<sequence length="167" mass="19485">MQEFYSFSPIDENGNPFPFNSLRNKVVLIVNVASHCAFTPQYKELEYLYEKYKSHGLVIVAFPCGQFGNQEFEKDKEINKFCQDKYGVTFPILHKIRCNGQKQDPVYKFLKNSVSGKSGIKMIKWNFEKFVVDRNGKVVKRFSCMTRPLELCPIIEELLNQPPEEQI</sequence>
<accession>P36014</accession>
<accession>D6VXQ8</accession>
<keyword id="KW-0049">Antioxidant</keyword>
<keyword id="KW-1015">Disulfide bond</keyword>
<keyword id="KW-0472">Membrane</keyword>
<keyword id="KW-0496">Mitochondrion</keyword>
<keyword id="KW-1000">Mitochondrion outer membrane</keyword>
<keyword id="KW-0560">Oxidoreductase</keyword>
<keyword id="KW-0575">Peroxidase</keyword>
<keyword id="KW-0576">Peroxisome</keyword>
<keyword id="KW-0676">Redox-active center</keyword>
<keyword id="KW-1185">Reference proteome</keyword>